<organism>
    <name type="scientific">Glycine max</name>
    <name type="common">Soybean</name>
    <name type="synonym">Glycine hispida</name>
    <dbReference type="NCBI Taxonomy" id="3847"/>
    <lineage>
        <taxon>Eukaryota</taxon>
        <taxon>Viridiplantae</taxon>
        <taxon>Streptophyta</taxon>
        <taxon>Embryophyta</taxon>
        <taxon>Tracheophyta</taxon>
        <taxon>Spermatophyta</taxon>
        <taxon>Magnoliopsida</taxon>
        <taxon>eudicotyledons</taxon>
        <taxon>Gunneridae</taxon>
        <taxon>Pentapetalae</taxon>
        <taxon>rosids</taxon>
        <taxon>fabids</taxon>
        <taxon>Fabales</taxon>
        <taxon>Fabaceae</taxon>
        <taxon>Papilionoideae</taxon>
        <taxon>50 kb inversion clade</taxon>
        <taxon>NPAAA clade</taxon>
        <taxon>indigoferoid/millettioid clade</taxon>
        <taxon>Phaseoleae</taxon>
        <taxon>Glycine</taxon>
        <taxon>Glycine subgen. Soja</taxon>
    </lineage>
</organism>
<name>CSPLB_SOYBN</name>
<keyword id="KW-1003">Cell membrane</keyword>
<keyword id="KW-0472">Membrane</keyword>
<keyword id="KW-1185">Reference proteome</keyword>
<keyword id="KW-0812">Transmembrane</keyword>
<keyword id="KW-1133">Transmembrane helix</keyword>
<proteinExistence type="evidence at transcript level"/>
<comment type="subunit">
    <text evidence="1">Homodimer and heterodimers.</text>
</comment>
<comment type="subcellular location">
    <subcellularLocation>
        <location evidence="1">Cell membrane</location>
        <topology evidence="1">Multi-pass membrane protein</topology>
    </subcellularLocation>
</comment>
<comment type="similarity">
    <text evidence="3">Belongs to the Casparian strip membrane proteins (CASP) family.</text>
</comment>
<reference key="1">
    <citation type="submission" date="2009-08" db="EMBL/GenBank/DDBJ databases">
        <authorList>
            <person name="Cheung F."/>
            <person name="Xiao Y."/>
            <person name="Chan A."/>
            <person name="Moskal W."/>
            <person name="Town C.D."/>
        </authorList>
    </citation>
    <scope>NUCLEOTIDE SEQUENCE [LARGE SCALE MRNA]</scope>
</reference>
<reference key="2">
    <citation type="journal article" date="2014" name="Plant Physiol.">
        <title>Functional and evolutionary analysis of the CASPARIAN STRIP MEMBRANE DOMAIN PROTEIN family.</title>
        <authorList>
            <person name="Roppolo D."/>
            <person name="Boeckmann B."/>
            <person name="Pfister A."/>
            <person name="Boutet E."/>
            <person name="Rubio M.C."/>
            <person name="Denervaud-Tendon V."/>
            <person name="Vermeer J.E."/>
            <person name="Gheyselinck J."/>
            <person name="Xenarios I."/>
            <person name="Geldner N."/>
        </authorList>
    </citation>
    <scope>GENE FAMILY</scope>
    <scope>NOMENCLATURE</scope>
</reference>
<feature type="chain" id="PRO_0000391580" description="CASP-like protein 2A1">
    <location>
        <begin position="1"/>
        <end position="208"/>
    </location>
</feature>
<feature type="topological domain" description="Cytoplasmic" evidence="2">
    <location>
        <begin position="1"/>
        <end position="36"/>
    </location>
</feature>
<feature type="transmembrane region" description="Helical" evidence="2">
    <location>
        <begin position="37"/>
        <end position="57"/>
    </location>
</feature>
<feature type="topological domain" description="Extracellular" evidence="2">
    <location>
        <begin position="58"/>
        <end position="79"/>
    </location>
</feature>
<feature type="transmembrane region" description="Helical" evidence="2">
    <location>
        <begin position="80"/>
        <end position="100"/>
    </location>
</feature>
<feature type="topological domain" description="Cytoplasmic" evidence="2">
    <location>
        <begin position="101"/>
        <end position="107"/>
    </location>
</feature>
<feature type="transmembrane region" description="Helical" evidence="2">
    <location>
        <begin position="108"/>
        <end position="128"/>
    </location>
</feature>
<feature type="topological domain" description="Extracellular" evidence="2">
    <location>
        <begin position="129"/>
        <end position="159"/>
    </location>
</feature>
<feature type="transmembrane region" description="Helical" evidence="2">
    <location>
        <begin position="160"/>
        <end position="180"/>
    </location>
</feature>
<feature type="topological domain" description="Cytoplasmic" evidence="2">
    <location>
        <begin position="181"/>
        <end position="208"/>
    </location>
</feature>
<dbReference type="EMBL" id="BT090361">
    <property type="protein sequence ID" value="ACU14436.1"/>
    <property type="molecule type" value="mRNA"/>
</dbReference>
<dbReference type="SMR" id="C6SYW3"/>
<dbReference type="FunCoup" id="C6SYW3">
    <property type="interactions" value="1616"/>
</dbReference>
<dbReference type="PaxDb" id="3847-GLYMA14G38970.1"/>
<dbReference type="eggNOG" id="ENOG502S0J7">
    <property type="taxonomic scope" value="Eukaryota"/>
</dbReference>
<dbReference type="InParanoid" id="C6SYW3"/>
<dbReference type="Proteomes" id="UP000008827">
    <property type="component" value="Unplaced"/>
</dbReference>
<dbReference type="GO" id="GO:0005886">
    <property type="term" value="C:plasma membrane"/>
    <property type="evidence" value="ECO:0007669"/>
    <property type="project" value="UniProtKB-SubCell"/>
</dbReference>
<dbReference type="InterPro" id="IPR006459">
    <property type="entry name" value="CASP/CASPL"/>
</dbReference>
<dbReference type="InterPro" id="IPR006702">
    <property type="entry name" value="CASP_dom"/>
</dbReference>
<dbReference type="NCBIfam" id="TIGR01569">
    <property type="entry name" value="A_tha_TIGR01569"/>
    <property type="match status" value="1"/>
</dbReference>
<dbReference type="PANTHER" id="PTHR33573:SF46">
    <property type="entry name" value="CASP-LIKE PROTEIN 2A1"/>
    <property type="match status" value="1"/>
</dbReference>
<dbReference type="PANTHER" id="PTHR33573">
    <property type="entry name" value="CASP-LIKE PROTEIN 4A4"/>
    <property type="match status" value="1"/>
</dbReference>
<dbReference type="Pfam" id="PF04535">
    <property type="entry name" value="CASP_dom"/>
    <property type="match status" value="1"/>
</dbReference>
<protein>
    <recommendedName>
        <fullName>CASP-like protein 2A1</fullName>
        <shortName>GmCASPL2A1</shortName>
    </recommendedName>
</protein>
<accession>C6SYW3</accession>
<sequence>MEERSGVLETSRSCKQLIGPEGSDKEFEGYIDSNLRVVETFLRLFPIGLCVTALVIMLKNSQENKYGSVSYTDLGAFRYLVHANGICAGYSLFSAIFVALPRLSSVHIAWTFFVLDQVLTYIILSAGAASAEVLYLAEKGNMATAWSSACRSFGPFCHKVTASTTITFVVVVFYVLLSLISSYKLFSKYDAPTVSNPSMGADIVAFHG</sequence>
<evidence type="ECO:0000250" key="1"/>
<evidence type="ECO:0000255" key="2"/>
<evidence type="ECO:0000305" key="3"/>